<sequence length="213" mass="23399">MFNQSYLNVYFICGTSDVPSHRTIHEVLEAALKAGITLFQFREKGESALKGNDKLVLAKELQHLCHQYDVPFIVNDDVSLAKEINADGIHVGQDDAKVKEIAQYFTDKIIGLSISDLDEYAKSDLTHVDYIGVGPIYPTPSKHDAHIPVGPEMIATFKEMNPQLPIVAIGGINTNNVAPIVEAGANGISVISAISKSENIEKTVNRFKDFFNN</sequence>
<organism>
    <name type="scientific">Staphylococcus aureus (strain N315)</name>
    <dbReference type="NCBI Taxonomy" id="158879"/>
    <lineage>
        <taxon>Bacteria</taxon>
        <taxon>Bacillati</taxon>
        <taxon>Bacillota</taxon>
        <taxon>Bacilli</taxon>
        <taxon>Bacillales</taxon>
        <taxon>Staphylococcaceae</taxon>
        <taxon>Staphylococcus</taxon>
    </lineage>
</organism>
<accession>P66919</accession>
<accession>Q99SG6</accession>
<reference key="1">
    <citation type="journal article" date="2001" name="Lancet">
        <title>Whole genome sequencing of meticillin-resistant Staphylococcus aureus.</title>
        <authorList>
            <person name="Kuroda M."/>
            <person name="Ohta T."/>
            <person name="Uchiyama I."/>
            <person name="Baba T."/>
            <person name="Yuzawa H."/>
            <person name="Kobayashi I."/>
            <person name="Cui L."/>
            <person name="Oguchi A."/>
            <person name="Aoki K."/>
            <person name="Nagai Y."/>
            <person name="Lian J.-Q."/>
            <person name="Ito T."/>
            <person name="Kanamori M."/>
            <person name="Matsumaru H."/>
            <person name="Maruyama A."/>
            <person name="Murakami H."/>
            <person name="Hosoyama A."/>
            <person name="Mizutani-Ui Y."/>
            <person name="Takahashi N.K."/>
            <person name="Sawano T."/>
            <person name="Inoue R."/>
            <person name="Kaito C."/>
            <person name="Sekimizu K."/>
            <person name="Hirakawa H."/>
            <person name="Kuhara S."/>
            <person name="Goto S."/>
            <person name="Yabuzaki J."/>
            <person name="Kanehisa M."/>
            <person name="Yamashita A."/>
            <person name="Oshima K."/>
            <person name="Furuya K."/>
            <person name="Yoshino C."/>
            <person name="Shiba T."/>
            <person name="Hattori M."/>
            <person name="Ogasawara N."/>
            <person name="Hayashi H."/>
            <person name="Hiramatsu K."/>
        </authorList>
    </citation>
    <scope>NUCLEOTIDE SEQUENCE [LARGE SCALE GENOMIC DNA]</scope>
    <source>
        <strain>N315</strain>
    </source>
</reference>
<reference key="2">
    <citation type="submission" date="2007-10" db="UniProtKB">
        <title>Shotgun proteomic analysis of total and membrane protein extracts of S. aureus strain N315.</title>
        <authorList>
            <person name="Vaezzadeh A.R."/>
            <person name="Deshusses J."/>
            <person name="Lescuyer P."/>
            <person name="Hochstrasser D.F."/>
        </authorList>
    </citation>
    <scope>IDENTIFICATION BY MASS SPECTROMETRY [LARGE SCALE ANALYSIS]</scope>
    <source>
        <strain>N315</strain>
    </source>
</reference>
<evidence type="ECO:0000255" key="1">
    <source>
        <dbReference type="HAMAP-Rule" id="MF_00097"/>
    </source>
</evidence>
<protein>
    <recommendedName>
        <fullName evidence="1">Thiamine-phosphate synthase</fullName>
        <shortName evidence="1">TP synthase</shortName>
        <shortName evidence="1">TPS</shortName>
        <ecNumber evidence="1">2.5.1.3</ecNumber>
    </recommendedName>
    <alternativeName>
        <fullName evidence="1">Thiamine-phosphate pyrophosphorylase</fullName>
        <shortName evidence="1">TMP pyrophosphorylase</shortName>
        <shortName evidence="1">TMP-PPase</shortName>
    </alternativeName>
</protein>
<dbReference type="EC" id="2.5.1.3" evidence="1"/>
<dbReference type="EMBL" id="BA000018">
    <property type="protein sequence ID" value="BAB43178.1"/>
    <property type="molecule type" value="Genomic_DNA"/>
</dbReference>
<dbReference type="PIR" id="A99902">
    <property type="entry name" value="A99902"/>
</dbReference>
<dbReference type="RefSeq" id="WP_000483153.1">
    <property type="nucleotide sequence ID" value="NC_002745.2"/>
</dbReference>
<dbReference type="SMR" id="P66919"/>
<dbReference type="EnsemblBacteria" id="BAB43178">
    <property type="protein sequence ID" value="BAB43178"/>
    <property type="gene ID" value="BAB43178"/>
</dbReference>
<dbReference type="KEGG" id="sau:SA1894"/>
<dbReference type="HOGENOM" id="CLU_018272_3_2_9"/>
<dbReference type="UniPathway" id="UPA00060">
    <property type="reaction ID" value="UER00141"/>
</dbReference>
<dbReference type="GO" id="GO:0005737">
    <property type="term" value="C:cytoplasm"/>
    <property type="evidence" value="ECO:0007669"/>
    <property type="project" value="TreeGrafter"/>
</dbReference>
<dbReference type="GO" id="GO:0000287">
    <property type="term" value="F:magnesium ion binding"/>
    <property type="evidence" value="ECO:0007669"/>
    <property type="project" value="UniProtKB-UniRule"/>
</dbReference>
<dbReference type="GO" id="GO:0004789">
    <property type="term" value="F:thiamine-phosphate diphosphorylase activity"/>
    <property type="evidence" value="ECO:0007669"/>
    <property type="project" value="UniProtKB-UniRule"/>
</dbReference>
<dbReference type="GO" id="GO:0009228">
    <property type="term" value="P:thiamine biosynthetic process"/>
    <property type="evidence" value="ECO:0007669"/>
    <property type="project" value="UniProtKB-KW"/>
</dbReference>
<dbReference type="GO" id="GO:0009229">
    <property type="term" value="P:thiamine diphosphate biosynthetic process"/>
    <property type="evidence" value="ECO:0007669"/>
    <property type="project" value="UniProtKB-UniRule"/>
</dbReference>
<dbReference type="CDD" id="cd00564">
    <property type="entry name" value="TMP_TenI"/>
    <property type="match status" value="1"/>
</dbReference>
<dbReference type="FunFam" id="3.20.20.70:FF:000096">
    <property type="entry name" value="Thiamine-phosphate synthase"/>
    <property type="match status" value="1"/>
</dbReference>
<dbReference type="Gene3D" id="3.20.20.70">
    <property type="entry name" value="Aldolase class I"/>
    <property type="match status" value="1"/>
</dbReference>
<dbReference type="HAMAP" id="MF_00097">
    <property type="entry name" value="TMP_synthase"/>
    <property type="match status" value="1"/>
</dbReference>
<dbReference type="InterPro" id="IPR013785">
    <property type="entry name" value="Aldolase_TIM"/>
</dbReference>
<dbReference type="InterPro" id="IPR036206">
    <property type="entry name" value="ThiamineP_synth_sf"/>
</dbReference>
<dbReference type="InterPro" id="IPR022998">
    <property type="entry name" value="ThiamineP_synth_TenI"/>
</dbReference>
<dbReference type="InterPro" id="IPR034291">
    <property type="entry name" value="TMP_synthase"/>
</dbReference>
<dbReference type="NCBIfam" id="TIGR00693">
    <property type="entry name" value="thiE"/>
    <property type="match status" value="1"/>
</dbReference>
<dbReference type="PANTHER" id="PTHR20857">
    <property type="entry name" value="THIAMINE-PHOSPHATE PYROPHOSPHORYLASE"/>
    <property type="match status" value="1"/>
</dbReference>
<dbReference type="PANTHER" id="PTHR20857:SF15">
    <property type="entry name" value="THIAMINE-PHOSPHATE SYNTHASE"/>
    <property type="match status" value="1"/>
</dbReference>
<dbReference type="Pfam" id="PF02581">
    <property type="entry name" value="TMP-TENI"/>
    <property type="match status" value="1"/>
</dbReference>
<dbReference type="SUPFAM" id="SSF51391">
    <property type="entry name" value="Thiamin phosphate synthase"/>
    <property type="match status" value="1"/>
</dbReference>
<keyword id="KW-0460">Magnesium</keyword>
<keyword id="KW-0479">Metal-binding</keyword>
<keyword id="KW-0784">Thiamine biosynthesis</keyword>
<keyword id="KW-0808">Transferase</keyword>
<comment type="function">
    <text evidence="1">Condenses 4-methyl-5-(beta-hydroxyethyl)thiazole monophosphate (THZ-P) and 2-methyl-4-amino-5-hydroxymethyl pyrimidine pyrophosphate (HMP-PP) to form thiamine monophosphate (TMP).</text>
</comment>
<comment type="catalytic activity">
    <reaction evidence="1">
        <text>2-[(2R,5Z)-2-carboxy-4-methylthiazol-5(2H)-ylidene]ethyl phosphate + 4-amino-2-methyl-5-(diphosphooxymethyl)pyrimidine + 2 H(+) = thiamine phosphate + CO2 + diphosphate</text>
        <dbReference type="Rhea" id="RHEA:47844"/>
        <dbReference type="ChEBI" id="CHEBI:15378"/>
        <dbReference type="ChEBI" id="CHEBI:16526"/>
        <dbReference type="ChEBI" id="CHEBI:33019"/>
        <dbReference type="ChEBI" id="CHEBI:37575"/>
        <dbReference type="ChEBI" id="CHEBI:57841"/>
        <dbReference type="ChEBI" id="CHEBI:62899"/>
        <dbReference type="EC" id="2.5.1.3"/>
    </reaction>
</comment>
<comment type="catalytic activity">
    <reaction evidence="1">
        <text>2-(2-carboxy-4-methylthiazol-5-yl)ethyl phosphate + 4-amino-2-methyl-5-(diphosphooxymethyl)pyrimidine + 2 H(+) = thiamine phosphate + CO2 + diphosphate</text>
        <dbReference type="Rhea" id="RHEA:47848"/>
        <dbReference type="ChEBI" id="CHEBI:15378"/>
        <dbReference type="ChEBI" id="CHEBI:16526"/>
        <dbReference type="ChEBI" id="CHEBI:33019"/>
        <dbReference type="ChEBI" id="CHEBI:37575"/>
        <dbReference type="ChEBI" id="CHEBI:57841"/>
        <dbReference type="ChEBI" id="CHEBI:62890"/>
        <dbReference type="EC" id="2.5.1.3"/>
    </reaction>
</comment>
<comment type="catalytic activity">
    <reaction evidence="1">
        <text>4-methyl-5-(2-phosphooxyethyl)-thiazole + 4-amino-2-methyl-5-(diphosphooxymethyl)pyrimidine + H(+) = thiamine phosphate + diphosphate</text>
        <dbReference type="Rhea" id="RHEA:22328"/>
        <dbReference type="ChEBI" id="CHEBI:15378"/>
        <dbReference type="ChEBI" id="CHEBI:33019"/>
        <dbReference type="ChEBI" id="CHEBI:37575"/>
        <dbReference type="ChEBI" id="CHEBI:57841"/>
        <dbReference type="ChEBI" id="CHEBI:58296"/>
        <dbReference type="EC" id="2.5.1.3"/>
    </reaction>
</comment>
<comment type="cofactor">
    <cofactor evidence="1">
        <name>Mg(2+)</name>
        <dbReference type="ChEBI" id="CHEBI:18420"/>
    </cofactor>
    <text evidence="1">Binds 1 Mg(2+) ion per subunit.</text>
</comment>
<comment type="pathway">
    <text evidence="1">Cofactor biosynthesis; thiamine diphosphate biosynthesis; thiamine phosphate from 4-amino-2-methyl-5-diphosphomethylpyrimidine and 4-methyl-5-(2-phosphoethyl)-thiazole: step 1/1.</text>
</comment>
<comment type="similarity">
    <text evidence="1">Belongs to the thiamine-phosphate synthase family.</text>
</comment>
<feature type="chain" id="PRO_0000157044" description="Thiamine-phosphate synthase">
    <location>
        <begin position="1"/>
        <end position="213"/>
    </location>
</feature>
<feature type="binding site" evidence="1">
    <location>
        <begin position="40"/>
        <end position="44"/>
    </location>
    <ligand>
        <name>4-amino-2-methyl-5-(diphosphooxymethyl)pyrimidine</name>
        <dbReference type="ChEBI" id="CHEBI:57841"/>
    </ligand>
</feature>
<feature type="binding site" evidence="1">
    <location>
        <position position="75"/>
    </location>
    <ligand>
        <name>4-amino-2-methyl-5-(diphosphooxymethyl)pyrimidine</name>
        <dbReference type="ChEBI" id="CHEBI:57841"/>
    </ligand>
</feature>
<feature type="binding site" evidence="1">
    <location>
        <position position="76"/>
    </location>
    <ligand>
        <name>Mg(2+)</name>
        <dbReference type="ChEBI" id="CHEBI:18420"/>
    </ligand>
</feature>
<feature type="binding site" evidence="1">
    <location>
        <position position="95"/>
    </location>
    <ligand>
        <name>Mg(2+)</name>
        <dbReference type="ChEBI" id="CHEBI:18420"/>
    </ligand>
</feature>
<feature type="binding site" evidence="1">
    <location>
        <position position="113"/>
    </location>
    <ligand>
        <name>4-amino-2-methyl-5-(diphosphooxymethyl)pyrimidine</name>
        <dbReference type="ChEBI" id="CHEBI:57841"/>
    </ligand>
</feature>
<feature type="binding site" evidence="1">
    <location>
        <begin position="139"/>
        <end position="141"/>
    </location>
    <ligand>
        <name>2-[(2R,5Z)-2-carboxy-4-methylthiazol-5(2H)-ylidene]ethyl phosphate</name>
        <dbReference type="ChEBI" id="CHEBI:62899"/>
    </ligand>
</feature>
<feature type="binding site" evidence="1">
    <location>
        <position position="142"/>
    </location>
    <ligand>
        <name>4-amino-2-methyl-5-(diphosphooxymethyl)pyrimidine</name>
        <dbReference type="ChEBI" id="CHEBI:57841"/>
    </ligand>
</feature>
<feature type="binding site" evidence="1">
    <location>
        <position position="171"/>
    </location>
    <ligand>
        <name>2-[(2R,5Z)-2-carboxy-4-methylthiazol-5(2H)-ylidene]ethyl phosphate</name>
        <dbReference type="ChEBI" id="CHEBI:62899"/>
    </ligand>
</feature>
<feature type="binding site" evidence="1">
    <location>
        <begin position="191"/>
        <end position="192"/>
    </location>
    <ligand>
        <name>2-[(2R,5Z)-2-carboxy-4-methylthiazol-5(2H)-ylidene]ethyl phosphate</name>
        <dbReference type="ChEBI" id="CHEBI:62899"/>
    </ligand>
</feature>
<gene>
    <name evidence="1" type="primary">thiE</name>
    <name type="ordered locus">SA1894</name>
</gene>
<name>THIE_STAAN</name>
<proteinExistence type="evidence at protein level"/>